<sequence length="137" mass="15440">MTEKVIKTDAEWRAMLDDEEYDVTRHAATEAPFSGRYWDHHEHGIYTCVCCNTPLFASDAKFDSGCGWPSYFTALNPDNVKEKIDRAYGMIRTEVICNVCDAHLGHVFNDGPPPTGLRYCINSASLRFDATPDLNES</sequence>
<evidence type="ECO:0000255" key="1">
    <source>
        <dbReference type="HAMAP-Rule" id="MF_01400"/>
    </source>
</evidence>
<evidence type="ECO:0000255" key="2">
    <source>
        <dbReference type="PROSITE-ProRule" id="PRU01126"/>
    </source>
</evidence>
<dbReference type="EC" id="1.8.4.12" evidence="1"/>
<dbReference type="EMBL" id="CU207211">
    <property type="protein sequence ID" value="CAL61892.1"/>
    <property type="molecule type" value="Genomic_DNA"/>
</dbReference>
<dbReference type="SMR" id="A4G5V5"/>
<dbReference type="STRING" id="204773.HEAR1736"/>
<dbReference type="KEGG" id="har:HEAR1736"/>
<dbReference type="eggNOG" id="COG0229">
    <property type="taxonomic scope" value="Bacteria"/>
</dbReference>
<dbReference type="HOGENOM" id="CLU_031040_8_5_4"/>
<dbReference type="OrthoDB" id="9785497at2"/>
<dbReference type="Proteomes" id="UP000006697">
    <property type="component" value="Chromosome"/>
</dbReference>
<dbReference type="GO" id="GO:0005737">
    <property type="term" value="C:cytoplasm"/>
    <property type="evidence" value="ECO:0007669"/>
    <property type="project" value="TreeGrafter"/>
</dbReference>
<dbReference type="GO" id="GO:0033743">
    <property type="term" value="F:peptide-methionine (R)-S-oxide reductase activity"/>
    <property type="evidence" value="ECO:0007669"/>
    <property type="project" value="UniProtKB-UniRule"/>
</dbReference>
<dbReference type="GO" id="GO:0008270">
    <property type="term" value="F:zinc ion binding"/>
    <property type="evidence" value="ECO:0007669"/>
    <property type="project" value="UniProtKB-UniRule"/>
</dbReference>
<dbReference type="GO" id="GO:0030091">
    <property type="term" value="P:protein repair"/>
    <property type="evidence" value="ECO:0007669"/>
    <property type="project" value="InterPro"/>
</dbReference>
<dbReference type="GO" id="GO:0006979">
    <property type="term" value="P:response to oxidative stress"/>
    <property type="evidence" value="ECO:0007669"/>
    <property type="project" value="InterPro"/>
</dbReference>
<dbReference type="FunFam" id="2.170.150.20:FF:000001">
    <property type="entry name" value="Peptide methionine sulfoxide reductase MsrB"/>
    <property type="match status" value="1"/>
</dbReference>
<dbReference type="Gene3D" id="2.170.150.20">
    <property type="entry name" value="Peptide methionine sulfoxide reductase"/>
    <property type="match status" value="1"/>
</dbReference>
<dbReference type="HAMAP" id="MF_01400">
    <property type="entry name" value="MsrB"/>
    <property type="match status" value="1"/>
</dbReference>
<dbReference type="InterPro" id="IPR028427">
    <property type="entry name" value="Met_Sox_Rdtase_MsrB"/>
</dbReference>
<dbReference type="InterPro" id="IPR002579">
    <property type="entry name" value="Met_Sox_Rdtase_MsrB_dom"/>
</dbReference>
<dbReference type="InterPro" id="IPR011057">
    <property type="entry name" value="Mss4-like_sf"/>
</dbReference>
<dbReference type="NCBIfam" id="TIGR00357">
    <property type="entry name" value="peptide-methionine (R)-S-oxide reductase MsrB"/>
    <property type="match status" value="1"/>
</dbReference>
<dbReference type="PANTHER" id="PTHR10173">
    <property type="entry name" value="METHIONINE SULFOXIDE REDUCTASE"/>
    <property type="match status" value="1"/>
</dbReference>
<dbReference type="PANTHER" id="PTHR10173:SF52">
    <property type="entry name" value="METHIONINE-R-SULFOXIDE REDUCTASE B1"/>
    <property type="match status" value="1"/>
</dbReference>
<dbReference type="Pfam" id="PF01641">
    <property type="entry name" value="SelR"/>
    <property type="match status" value="1"/>
</dbReference>
<dbReference type="SUPFAM" id="SSF51316">
    <property type="entry name" value="Mss4-like"/>
    <property type="match status" value="1"/>
</dbReference>
<dbReference type="PROSITE" id="PS51790">
    <property type="entry name" value="MSRB"/>
    <property type="match status" value="1"/>
</dbReference>
<accession>A4G5V5</accession>
<reference key="1">
    <citation type="journal article" date="2007" name="PLoS Genet.">
        <title>A tale of two oxidation states: bacterial colonization of arsenic-rich environments.</title>
        <authorList>
            <person name="Muller D."/>
            <person name="Medigue C."/>
            <person name="Koechler S."/>
            <person name="Barbe V."/>
            <person name="Barakat M."/>
            <person name="Talla E."/>
            <person name="Bonnefoy V."/>
            <person name="Krin E."/>
            <person name="Arsene-Ploetze F."/>
            <person name="Carapito C."/>
            <person name="Chandler M."/>
            <person name="Cournoyer B."/>
            <person name="Cruveiller S."/>
            <person name="Dossat C."/>
            <person name="Duval S."/>
            <person name="Heymann M."/>
            <person name="Leize E."/>
            <person name="Lieutaud A."/>
            <person name="Lievremont D."/>
            <person name="Makita Y."/>
            <person name="Mangenot S."/>
            <person name="Nitschke W."/>
            <person name="Ortet P."/>
            <person name="Perdrial N."/>
            <person name="Schoepp B."/>
            <person name="Siguier P."/>
            <person name="Simeonova D.D."/>
            <person name="Rouy Z."/>
            <person name="Segurens B."/>
            <person name="Turlin E."/>
            <person name="Vallenet D."/>
            <person name="van Dorsselaer A."/>
            <person name="Weiss S."/>
            <person name="Weissenbach J."/>
            <person name="Lett M.-C."/>
            <person name="Danchin A."/>
            <person name="Bertin P.N."/>
        </authorList>
    </citation>
    <scope>NUCLEOTIDE SEQUENCE [LARGE SCALE GENOMIC DNA]</scope>
    <source>
        <strain>ULPAs1</strain>
    </source>
</reference>
<keyword id="KW-0479">Metal-binding</keyword>
<keyword id="KW-0560">Oxidoreductase</keyword>
<keyword id="KW-1185">Reference proteome</keyword>
<keyword id="KW-0862">Zinc</keyword>
<organism>
    <name type="scientific">Herminiimonas arsenicoxydans</name>
    <dbReference type="NCBI Taxonomy" id="204773"/>
    <lineage>
        <taxon>Bacteria</taxon>
        <taxon>Pseudomonadati</taxon>
        <taxon>Pseudomonadota</taxon>
        <taxon>Betaproteobacteria</taxon>
        <taxon>Burkholderiales</taxon>
        <taxon>Oxalobacteraceae</taxon>
        <taxon>Herminiimonas</taxon>
    </lineage>
</organism>
<proteinExistence type="inferred from homology"/>
<comment type="catalytic activity">
    <reaction evidence="1">
        <text>L-methionyl-[protein] + [thioredoxin]-disulfide + H2O = L-methionyl-(R)-S-oxide-[protein] + [thioredoxin]-dithiol</text>
        <dbReference type="Rhea" id="RHEA:24164"/>
        <dbReference type="Rhea" id="RHEA-COMP:10698"/>
        <dbReference type="Rhea" id="RHEA-COMP:10700"/>
        <dbReference type="Rhea" id="RHEA-COMP:12313"/>
        <dbReference type="Rhea" id="RHEA-COMP:12314"/>
        <dbReference type="ChEBI" id="CHEBI:15377"/>
        <dbReference type="ChEBI" id="CHEBI:16044"/>
        <dbReference type="ChEBI" id="CHEBI:29950"/>
        <dbReference type="ChEBI" id="CHEBI:45764"/>
        <dbReference type="ChEBI" id="CHEBI:50058"/>
        <dbReference type="EC" id="1.8.4.12"/>
    </reaction>
</comment>
<comment type="cofactor">
    <cofactor evidence="1">
        <name>Zn(2+)</name>
        <dbReference type="ChEBI" id="CHEBI:29105"/>
    </cofactor>
    <text evidence="1">Binds 1 zinc ion per subunit. The zinc ion is important for the structural integrity of the protein.</text>
</comment>
<comment type="similarity">
    <text evidence="1">Belongs to the MsrB Met sulfoxide reductase family.</text>
</comment>
<protein>
    <recommendedName>
        <fullName evidence="1">Peptide methionine sulfoxide reductase MsrB</fullName>
        <ecNumber evidence="1">1.8.4.12</ecNumber>
    </recommendedName>
    <alternativeName>
        <fullName evidence="1">Peptide-methionine (R)-S-oxide reductase</fullName>
    </alternativeName>
</protein>
<feature type="chain" id="PRO_1000215173" description="Peptide methionine sulfoxide reductase MsrB">
    <location>
        <begin position="1"/>
        <end position="137"/>
    </location>
</feature>
<feature type="domain" description="MsrB" evidence="2">
    <location>
        <begin position="9"/>
        <end position="131"/>
    </location>
</feature>
<feature type="active site" description="Nucleophile" evidence="2">
    <location>
        <position position="120"/>
    </location>
</feature>
<feature type="binding site" evidence="2">
    <location>
        <position position="48"/>
    </location>
    <ligand>
        <name>Zn(2+)</name>
        <dbReference type="ChEBI" id="CHEBI:29105"/>
    </ligand>
</feature>
<feature type="binding site" evidence="2">
    <location>
        <position position="51"/>
    </location>
    <ligand>
        <name>Zn(2+)</name>
        <dbReference type="ChEBI" id="CHEBI:29105"/>
    </ligand>
</feature>
<feature type="binding site" evidence="2">
    <location>
        <position position="97"/>
    </location>
    <ligand>
        <name>Zn(2+)</name>
        <dbReference type="ChEBI" id="CHEBI:29105"/>
    </ligand>
</feature>
<feature type="binding site" evidence="2">
    <location>
        <position position="100"/>
    </location>
    <ligand>
        <name>Zn(2+)</name>
        <dbReference type="ChEBI" id="CHEBI:29105"/>
    </ligand>
</feature>
<name>MSRB_HERAR</name>
<gene>
    <name evidence="1" type="primary">msrB</name>
    <name type="ordered locus">HEAR1736</name>
</gene>